<keyword id="KW-0067">ATP-binding</keyword>
<keyword id="KW-0315">Glutamine amidotransferase</keyword>
<keyword id="KW-0332">GMP biosynthesis</keyword>
<keyword id="KW-0436">Ligase</keyword>
<keyword id="KW-0547">Nucleotide-binding</keyword>
<keyword id="KW-0658">Purine biosynthesis</keyword>
<keyword id="KW-1185">Reference proteome</keyword>
<protein>
    <recommendedName>
        <fullName evidence="1">GMP synthase [glutamine-hydrolyzing]</fullName>
        <ecNumber evidence="1">6.3.5.2</ecNumber>
    </recommendedName>
    <alternativeName>
        <fullName evidence="1">GMP synthetase</fullName>
    </alternativeName>
    <alternativeName>
        <fullName evidence="1">Glutamine amidotransferase</fullName>
    </alternativeName>
</protein>
<accession>A1AE43</accession>
<organism>
    <name type="scientific">Escherichia coli O1:K1 / APEC</name>
    <dbReference type="NCBI Taxonomy" id="405955"/>
    <lineage>
        <taxon>Bacteria</taxon>
        <taxon>Pseudomonadati</taxon>
        <taxon>Pseudomonadota</taxon>
        <taxon>Gammaproteobacteria</taxon>
        <taxon>Enterobacterales</taxon>
        <taxon>Enterobacteriaceae</taxon>
        <taxon>Escherichia</taxon>
    </lineage>
</organism>
<gene>
    <name evidence="1" type="primary">guaA</name>
    <name type="ordered locus">Ecok1_24390</name>
    <name type="ORF">APECO1_4019</name>
</gene>
<sequence length="525" mass="58665">MTENIHKHRILILDFGSQYTQLVARRVRELGVYCELWAWDVTEAQIRDFNPSGIILSGGPESTTEENSPRAPQYVFEAGVPVFGVCYGMQTMAMQLGGHVEASNEREFGYAQVEVVNDSALVRGIEDALTADGKPLLDVWMSHGDKVTAIPSDFVTVASTESCPFAIMANEEKRFYGVQFHPEVTHTRQGMRMLERFVRDICQCEALWTPAKIIDDAVARIREQVGDDKVILGLSGGVDSSVTAMLLHRAIGKNLTCVFVDNGLLRLNEAEQVLDMFGDHFGLNIVHVPAEDRFLSALAGENDPEAKRKIIGRVFVEVFDEEALKLEDVKWLAQGTIYPDVIESAASATGKAHVIKSHHNVGGLPKEMKMGLVEPLKELFKDEVRKIGLELGLPYDMLYRHPFPGPGLGVRVLGEVKKEYCDLLRRADAIFIEELRKADLYDKVSQAFTVFLPVRSVGVMGDGRKYDWVVSLRAVETIDFMTAHWAHLPYDFLGRVSNRIINEVNGISRVVYDISGKPPATIEWE</sequence>
<name>GUAA_ECOK1</name>
<feature type="chain" id="PRO_1000120285" description="GMP synthase [glutamine-hydrolyzing]">
    <location>
        <begin position="1"/>
        <end position="525"/>
    </location>
</feature>
<feature type="domain" description="Glutamine amidotransferase type-1" evidence="1">
    <location>
        <begin position="9"/>
        <end position="207"/>
    </location>
</feature>
<feature type="domain" description="GMPS ATP-PPase" evidence="1">
    <location>
        <begin position="208"/>
        <end position="400"/>
    </location>
</feature>
<feature type="active site" description="Nucleophile" evidence="1">
    <location>
        <position position="86"/>
    </location>
</feature>
<feature type="active site" evidence="1">
    <location>
        <position position="181"/>
    </location>
</feature>
<feature type="active site" evidence="1">
    <location>
        <position position="183"/>
    </location>
</feature>
<feature type="binding site" evidence="1">
    <location>
        <begin position="235"/>
        <end position="241"/>
    </location>
    <ligand>
        <name>ATP</name>
        <dbReference type="ChEBI" id="CHEBI:30616"/>
    </ligand>
</feature>
<comment type="function">
    <text evidence="1">Catalyzes the synthesis of GMP from XMP.</text>
</comment>
<comment type="catalytic activity">
    <reaction evidence="1">
        <text>XMP + L-glutamine + ATP + H2O = GMP + L-glutamate + AMP + diphosphate + 2 H(+)</text>
        <dbReference type="Rhea" id="RHEA:11680"/>
        <dbReference type="ChEBI" id="CHEBI:15377"/>
        <dbReference type="ChEBI" id="CHEBI:15378"/>
        <dbReference type="ChEBI" id="CHEBI:29985"/>
        <dbReference type="ChEBI" id="CHEBI:30616"/>
        <dbReference type="ChEBI" id="CHEBI:33019"/>
        <dbReference type="ChEBI" id="CHEBI:57464"/>
        <dbReference type="ChEBI" id="CHEBI:58115"/>
        <dbReference type="ChEBI" id="CHEBI:58359"/>
        <dbReference type="ChEBI" id="CHEBI:456215"/>
        <dbReference type="EC" id="6.3.5.2"/>
    </reaction>
</comment>
<comment type="pathway">
    <text evidence="1">Purine metabolism; GMP biosynthesis; GMP from XMP (L-Gln route): step 1/1.</text>
</comment>
<comment type="subunit">
    <text evidence="1">Homodimer.</text>
</comment>
<reference key="1">
    <citation type="journal article" date="2007" name="J. Bacteriol.">
        <title>The genome sequence of avian pathogenic Escherichia coli strain O1:K1:H7 shares strong similarities with human extraintestinal pathogenic E. coli genomes.</title>
        <authorList>
            <person name="Johnson T.J."/>
            <person name="Kariyawasam S."/>
            <person name="Wannemuehler Y."/>
            <person name="Mangiamele P."/>
            <person name="Johnson S.J."/>
            <person name="Doetkott C."/>
            <person name="Skyberg J.A."/>
            <person name="Lynne A.M."/>
            <person name="Johnson J.R."/>
            <person name="Nolan L.K."/>
        </authorList>
    </citation>
    <scope>NUCLEOTIDE SEQUENCE [LARGE SCALE GENOMIC DNA]</scope>
</reference>
<proteinExistence type="inferred from homology"/>
<evidence type="ECO:0000255" key="1">
    <source>
        <dbReference type="HAMAP-Rule" id="MF_00344"/>
    </source>
</evidence>
<dbReference type="EC" id="6.3.5.2" evidence="1"/>
<dbReference type="EMBL" id="CP000468">
    <property type="protein sequence ID" value="ABJ01933.1"/>
    <property type="molecule type" value="Genomic_DNA"/>
</dbReference>
<dbReference type="RefSeq" id="WP_000138282.1">
    <property type="nucleotide sequence ID" value="NZ_CADILS010000012.1"/>
</dbReference>
<dbReference type="SMR" id="A1AE43"/>
<dbReference type="MEROPS" id="C26.957"/>
<dbReference type="GeneID" id="75172615"/>
<dbReference type="KEGG" id="ecv:APECO1_4019"/>
<dbReference type="HOGENOM" id="CLU_014340_0_5_6"/>
<dbReference type="UniPathway" id="UPA00189">
    <property type="reaction ID" value="UER00296"/>
</dbReference>
<dbReference type="Proteomes" id="UP000008216">
    <property type="component" value="Chromosome"/>
</dbReference>
<dbReference type="GO" id="GO:0005829">
    <property type="term" value="C:cytosol"/>
    <property type="evidence" value="ECO:0007669"/>
    <property type="project" value="TreeGrafter"/>
</dbReference>
<dbReference type="GO" id="GO:0005524">
    <property type="term" value="F:ATP binding"/>
    <property type="evidence" value="ECO:0007669"/>
    <property type="project" value="UniProtKB-UniRule"/>
</dbReference>
<dbReference type="GO" id="GO:0003921">
    <property type="term" value="F:GMP synthase activity"/>
    <property type="evidence" value="ECO:0007669"/>
    <property type="project" value="InterPro"/>
</dbReference>
<dbReference type="CDD" id="cd01742">
    <property type="entry name" value="GATase1_GMP_Synthase"/>
    <property type="match status" value="1"/>
</dbReference>
<dbReference type="CDD" id="cd01997">
    <property type="entry name" value="GMP_synthase_C"/>
    <property type="match status" value="1"/>
</dbReference>
<dbReference type="FunFam" id="3.30.300.10:FF:000002">
    <property type="entry name" value="GMP synthase [glutamine-hydrolyzing]"/>
    <property type="match status" value="1"/>
</dbReference>
<dbReference type="FunFam" id="3.40.50.620:FF:000001">
    <property type="entry name" value="GMP synthase [glutamine-hydrolyzing]"/>
    <property type="match status" value="1"/>
</dbReference>
<dbReference type="FunFam" id="3.40.50.880:FF:000001">
    <property type="entry name" value="GMP synthase [glutamine-hydrolyzing]"/>
    <property type="match status" value="1"/>
</dbReference>
<dbReference type="Gene3D" id="3.30.300.10">
    <property type="match status" value="1"/>
</dbReference>
<dbReference type="Gene3D" id="3.40.50.880">
    <property type="match status" value="1"/>
</dbReference>
<dbReference type="Gene3D" id="3.40.50.620">
    <property type="entry name" value="HUPs"/>
    <property type="match status" value="1"/>
</dbReference>
<dbReference type="HAMAP" id="MF_00344">
    <property type="entry name" value="GMP_synthase"/>
    <property type="match status" value="1"/>
</dbReference>
<dbReference type="InterPro" id="IPR029062">
    <property type="entry name" value="Class_I_gatase-like"/>
</dbReference>
<dbReference type="InterPro" id="IPR017926">
    <property type="entry name" value="GATASE"/>
</dbReference>
<dbReference type="InterPro" id="IPR001674">
    <property type="entry name" value="GMP_synth_C"/>
</dbReference>
<dbReference type="InterPro" id="IPR004739">
    <property type="entry name" value="GMP_synth_GATase"/>
</dbReference>
<dbReference type="InterPro" id="IPR022955">
    <property type="entry name" value="GMP_synthase"/>
</dbReference>
<dbReference type="InterPro" id="IPR025777">
    <property type="entry name" value="GMPS_ATP_PPase_dom"/>
</dbReference>
<dbReference type="InterPro" id="IPR022310">
    <property type="entry name" value="NAD/GMP_synthase"/>
</dbReference>
<dbReference type="InterPro" id="IPR014729">
    <property type="entry name" value="Rossmann-like_a/b/a_fold"/>
</dbReference>
<dbReference type="NCBIfam" id="TIGR00884">
    <property type="entry name" value="guaA_Cterm"/>
    <property type="match status" value="1"/>
</dbReference>
<dbReference type="NCBIfam" id="TIGR00888">
    <property type="entry name" value="guaA_Nterm"/>
    <property type="match status" value="1"/>
</dbReference>
<dbReference type="NCBIfam" id="NF000848">
    <property type="entry name" value="PRK00074.1"/>
    <property type="match status" value="1"/>
</dbReference>
<dbReference type="PANTHER" id="PTHR11922:SF2">
    <property type="entry name" value="GMP SYNTHASE [GLUTAMINE-HYDROLYZING]"/>
    <property type="match status" value="1"/>
</dbReference>
<dbReference type="PANTHER" id="PTHR11922">
    <property type="entry name" value="GMP SYNTHASE-RELATED"/>
    <property type="match status" value="1"/>
</dbReference>
<dbReference type="Pfam" id="PF00117">
    <property type="entry name" value="GATase"/>
    <property type="match status" value="1"/>
</dbReference>
<dbReference type="Pfam" id="PF00958">
    <property type="entry name" value="GMP_synt_C"/>
    <property type="match status" value="1"/>
</dbReference>
<dbReference type="Pfam" id="PF02540">
    <property type="entry name" value="NAD_synthase"/>
    <property type="match status" value="1"/>
</dbReference>
<dbReference type="PRINTS" id="PR00097">
    <property type="entry name" value="ANTSNTHASEII"/>
</dbReference>
<dbReference type="PRINTS" id="PR00099">
    <property type="entry name" value="CPSGATASE"/>
</dbReference>
<dbReference type="PRINTS" id="PR00096">
    <property type="entry name" value="GATASE"/>
</dbReference>
<dbReference type="SUPFAM" id="SSF52402">
    <property type="entry name" value="Adenine nucleotide alpha hydrolases-like"/>
    <property type="match status" value="1"/>
</dbReference>
<dbReference type="SUPFAM" id="SSF52317">
    <property type="entry name" value="Class I glutamine amidotransferase-like"/>
    <property type="match status" value="1"/>
</dbReference>
<dbReference type="SUPFAM" id="SSF54810">
    <property type="entry name" value="GMP synthetase C-terminal dimerisation domain"/>
    <property type="match status" value="1"/>
</dbReference>
<dbReference type="PROSITE" id="PS51273">
    <property type="entry name" value="GATASE_TYPE_1"/>
    <property type="match status" value="1"/>
</dbReference>
<dbReference type="PROSITE" id="PS51553">
    <property type="entry name" value="GMPS_ATP_PPASE"/>
    <property type="match status" value="1"/>
</dbReference>